<keyword id="KW-0067">ATP-binding</keyword>
<keyword id="KW-0436">Ligase</keyword>
<keyword id="KW-0460">Magnesium</keyword>
<keyword id="KW-0464">Manganese</keyword>
<keyword id="KW-0479">Metal-binding</keyword>
<keyword id="KW-0547">Nucleotide-binding</keyword>
<keyword id="KW-0648">Protein biosynthesis</keyword>
<name>RIMK_AZOVD</name>
<organism>
    <name type="scientific">Azotobacter vinelandii (strain DJ / ATCC BAA-1303)</name>
    <dbReference type="NCBI Taxonomy" id="322710"/>
    <lineage>
        <taxon>Bacteria</taxon>
        <taxon>Pseudomonadati</taxon>
        <taxon>Pseudomonadota</taxon>
        <taxon>Gammaproteobacteria</taxon>
        <taxon>Pseudomonadales</taxon>
        <taxon>Pseudomonadaceae</taxon>
        <taxon>Azotobacter</taxon>
    </lineage>
</organism>
<feature type="chain" id="PRO_1000215473" description="Probable alpha-L-glutamate ligase">
    <location>
        <begin position="1"/>
        <end position="301"/>
    </location>
</feature>
<feature type="domain" description="ATP-grasp" evidence="1">
    <location>
        <begin position="104"/>
        <end position="287"/>
    </location>
</feature>
<feature type="binding site" evidence="1">
    <location>
        <position position="141"/>
    </location>
    <ligand>
        <name>ATP</name>
        <dbReference type="ChEBI" id="CHEBI:30616"/>
    </ligand>
</feature>
<feature type="binding site" evidence="1">
    <location>
        <begin position="178"/>
        <end position="179"/>
    </location>
    <ligand>
        <name>ATP</name>
        <dbReference type="ChEBI" id="CHEBI:30616"/>
    </ligand>
</feature>
<feature type="binding site" evidence="1">
    <location>
        <position position="187"/>
    </location>
    <ligand>
        <name>ATP</name>
        <dbReference type="ChEBI" id="CHEBI:30616"/>
    </ligand>
</feature>
<feature type="binding site" evidence="1">
    <location>
        <begin position="211"/>
        <end position="213"/>
    </location>
    <ligand>
        <name>ATP</name>
        <dbReference type="ChEBI" id="CHEBI:30616"/>
    </ligand>
</feature>
<feature type="binding site" evidence="1">
    <location>
        <position position="248"/>
    </location>
    <ligand>
        <name>Mg(2+)</name>
        <dbReference type="ChEBI" id="CHEBI:18420"/>
        <label>1</label>
    </ligand>
</feature>
<feature type="binding site" evidence="1">
    <location>
        <position position="248"/>
    </location>
    <ligand>
        <name>Mn(2+)</name>
        <dbReference type="ChEBI" id="CHEBI:29035"/>
        <label>1</label>
    </ligand>
</feature>
<feature type="binding site" evidence="1">
    <location>
        <position position="260"/>
    </location>
    <ligand>
        <name>Mg(2+)</name>
        <dbReference type="ChEBI" id="CHEBI:18420"/>
        <label>1</label>
    </ligand>
</feature>
<feature type="binding site" evidence="1">
    <location>
        <position position="260"/>
    </location>
    <ligand>
        <name>Mg(2+)</name>
        <dbReference type="ChEBI" id="CHEBI:18420"/>
        <label>2</label>
    </ligand>
</feature>
<feature type="binding site" evidence="1">
    <location>
        <position position="260"/>
    </location>
    <ligand>
        <name>Mn(2+)</name>
        <dbReference type="ChEBI" id="CHEBI:29035"/>
        <label>1</label>
    </ligand>
</feature>
<feature type="binding site" evidence="1">
    <location>
        <position position="260"/>
    </location>
    <ligand>
        <name>Mn(2+)</name>
        <dbReference type="ChEBI" id="CHEBI:29035"/>
        <label>2</label>
    </ligand>
</feature>
<feature type="binding site" evidence="1">
    <location>
        <position position="262"/>
    </location>
    <ligand>
        <name>Mg(2+)</name>
        <dbReference type="ChEBI" id="CHEBI:18420"/>
        <label>2</label>
    </ligand>
</feature>
<feature type="binding site" evidence="1">
    <location>
        <position position="262"/>
    </location>
    <ligand>
        <name>Mn(2+)</name>
        <dbReference type="ChEBI" id="CHEBI:29035"/>
        <label>2</label>
    </ligand>
</feature>
<sequence>MKIAVLSRNPRLYSTRRLVEAGERRGHQMVVIDTLRAYMNIASHKPQIHYRGRPLEGFDAVIPRIGASVTFYGCAVLRQFEMMGVFPLNESVAISRSRDKLRSLQLLSRKGIGLPVTGFAHSPDDIPDLIAMVGGAPLVIKLLEGTQGIGVVLCETQKAAESVIEAFMGMEQNIMVQEYIQEAGGADIRCFVVGEKVIAAMKRQAKPGEFRSNLHRGGTASLIKITPEERMTAIRAAKVMGLNVAGVDILRSNHGPLVMEVNSSPGLEGIETTTGKDVAGIIIEYLEKNAEHGLTRTRGKG</sequence>
<dbReference type="EC" id="6.3.2.-" evidence="1"/>
<dbReference type="EMBL" id="CP001157">
    <property type="protein sequence ID" value="ACO76767.1"/>
    <property type="molecule type" value="Genomic_DNA"/>
</dbReference>
<dbReference type="RefSeq" id="WP_012699195.1">
    <property type="nucleotide sequence ID" value="NC_012560.1"/>
</dbReference>
<dbReference type="SMR" id="C1DJI2"/>
<dbReference type="STRING" id="322710.Avin_05140"/>
<dbReference type="EnsemblBacteria" id="ACO76767">
    <property type="protein sequence ID" value="ACO76767"/>
    <property type="gene ID" value="Avin_05140"/>
</dbReference>
<dbReference type="GeneID" id="88183937"/>
<dbReference type="KEGG" id="avn:Avin_05140"/>
<dbReference type="eggNOG" id="COG0189">
    <property type="taxonomic scope" value="Bacteria"/>
</dbReference>
<dbReference type="HOGENOM" id="CLU_054353_0_1_6"/>
<dbReference type="OrthoDB" id="3865600at2"/>
<dbReference type="Proteomes" id="UP000002424">
    <property type="component" value="Chromosome"/>
</dbReference>
<dbReference type="GO" id="GO:0005737">
    <property type="term" value="C:cytoplasm"/>
    <property type="evidence" value="ECO:0007669"/>
    <property type="project" value="TreeGrafter"/>
</dbReference>
<dbReference type="GO" id="GO:0005524">
    <property type="term" value="F:ATP binding"/>
    <property type="evidence" value="ECO:0007669"/>
    <property type="project" value="UniProtKB-UniRule"/>
</dbReference>
<dbReference type="GO" id="GO:0046872">
    <property type="term" value="F:metal ion binding"/>
    <property type="evidence" value="ECO:0007669"/>
    <property type="project" value="UniProtKB-KW"/>
</dbReference>
<dbReference type="GO" id="GO:0018169">
    <property type="term" value="F:ribosomal S6-glutamic acid ligase activity"/>
    <property type="evidence" value="ECO:0007669"/>
    <property type="project" value="TreeGrafter"/>
</dbReference>
<dbReference type="GO" id="GO:0036211">
    <property type="term" value="P:protein modification process"/>
    <property type="evidence" value="ECO:0007669"/>
    <property type="project" value="InterPro"/>
</dbReference>
<dbReference type="GO" id="GO:0009432">
    <property type="term" value="P:SOS response"/>
    <property type="evidence" value="ECO:0007669"/>
    <property type="project" value="TreeGrafter"/>
</dbReference>
<dbReference type="GO" id="GO:0006412">
    <property type="term" value="P:translation"/>
    <property type="evidence" value="ECO:0007669"/>
    <property type="project" value="UniProtKB-KW"/>
</dbReference>
<dbReference type="FunFam" id="3.40.50.20:FF:000004">
    <property type="entry name" value="Probable alpha-L-glutamate ligase"/>
    <property type="match status" value="1"/>
</dbReference>
<dbReference type="FunFam" id="3.30.1490.20:FF:000005">
    <property type="entry name" value="Probable alpha-L-glutamate ligase 1"/>
    <property type="match status" value="1"/>
</dbReference>
<dbReference type="FunFam" id="3.30.470.20:FF:000016">
    <property type="entry name" value="Ribosomal protein S6--L-glutamate ligase"/>
    <property type="match status" value="1"/>
</dbReference>
<dbReference type="Gene3D" id="3.40.50.20">
    <property type="match status" value="1"/>
</dbReference>
<dbReference type="Gene3D" id="3.30.1490.20">
    <property type="entry name" value="ATP-grasp fold, A domain"/>
    <property type="match status" value="1"/>
</dbReference>
<dbReference type="Gene3D" id="3.30.470.20">
    <property type="entry name" value="ATP-grasp fold, B domain"/>
    <property type="match status" value="1"/>
</dbReference>
<dbReference type="HAMAP" id="MF_01552">
    <property type="entry name" value="RimK"/>
    <property type="match status" value="1"/>
</dbReference>
<dbReference type="InterPro" id="IPR011761">
    <property type="entry name" value="ATP-grasp"/>
</dbReference>
<dbReference type="InterPro" id="IPR013651">
    <property type="entry name" value="ATP-grasp_RimK-type"/>
</dbReference>
<dbReference type="InterPro" id="IPR013815">
    <property type="entry name" value="ATP_grasp_subdomain_1"/>
</dbReference>
<dbReference type="InterPro" id="IPR023533">
    <property type="entry name" value="RimK"/>
</dbReference>
<dbReference type="InterPro" id="IPR041107">
    <property type="entry name" value="Rimk_N"/>
</dbReference>
<dbReference type="InterPro" id="IPR004666">
    <property type="entry name" value="Rp_bS6_RimK/Lys_biosynth_LsyX"/>
</dbReference>
<dbReference type="NCBIfam" id="NF007764">
    <property type="entry name" value="PRK10446.1"/>
    <property type="match status" value="1"/>
</dbReference>
<dbReference type="NCBIfam" id="TIGR00768">
    <property type="entry name" value="rimK_fam"/>
    <property type="match status" value="1"/>
</dbReference>
<dbReference type="PANTHER" id="PTHR21621:SF7">
    <property type="entry name" value="RIBOSOMAL PROTEIN BS6--L-GLUTAMATE LIGASE"/>
    <property type="match status" value="1"/>
</dbReference>
<dbReference type="PANTHER" id="PTHR21621">
    <property type="entry name" value="RIBOSOMAL PROTEIN S6 MODIFICATION PROTEIN"/>
    <property type="match status" value="1"/>
</dbReference>
<dbReference type="Pfam" id="PF08443">
    <property type="entry name" value="RimK"/>
    <property type="match status" value="1"/>
</dbReference>
<dbReference type="Pfam" id="PF18030">
    <property type="entry name" value="Rimk_N"/>
    <property type="match status" value="1"/>
</dbReference>
<dbReference type="SUPFAM" id="SSF56059">
    <property type="entry name" value="Glutathione synthetase ATP-binding domain-like"/>
    <property type="match status" value="1"/>
</dbReference>
<dbReference type="PROSITE" id="PS50975">
    <property type="entry name" value="ATP_GRASP"/>
    <property type="match status" value="1"/>
</dbReference>
<comment type="cofactor">
    <cofactor evidence="1">
        <name>Mg(2+)</name>
        <dbReference type="ChEBI" id="CHEBI:18420"/>
    </cofactor>
    <cofactor evidence="1">
        <name>Mn(2+)</name>
        <dbReference type="ChEBI" id="CHEBI:29035"/>
    </cofactor>
    <text evidence="1">Binds 2 magnesium or manganese ions per subunit.</text>
</comment>
<comment type="similarity">
    <text evidence="1">Belongs to the RimK family.</text>
</comment>
<reference key="1">
    <citation type="journal article" date="2009" name="J. Bacteriol.">
        <title>Genome sequence of Azotobacter vinelandii, an obligate aerobe specialized to support diverse anaerobic metabolic processes.</title>
        <authorList>
            <person name="Setubal J.C."/>
            <person name="Dos Santos P."/>
            <person name="Goldman B.S."/>
            <person name="Ertesvaag H."/>
            <person name="Espin G."/>
            <person name="Rubio L.M."/>
            <person name="Valla S."/>
            <person name="Almeida N.F."/>
            <person name="Balasubramanian D."/>
            <person name="Cromes L."/>
            <person name="Curatti L."/>
            <person name="Du Z."/>
            <person name="Godsy E."/>
            <person name="Goodner B."/>
            <person name="Hellner-Burris K."/>
            <person name="Hernandez J.A."/>
            <person name="Houmiel K."/>
            <person name="Imperial J."/>
            <person name="Kennedy C."/>
            <person name="Larson T.J."/>
            <person name="Latreille P."/>
            <person name="Ligon L.S."/>
            <person name="Lu J."/>
            <person name="Maerk M."/>
            <person name="Miller N.M."/>
            <person name="Norton S."/>
            <person name="O'Carroll I.P."/>
            <person name="Paulsen I."/>
            <person name="Raulfs E.C."/>
            <person name="Roemer R."/>
            <person name="Rosser J."/>
            <person name="Segura D."/>
            <person name="Slater S."/>
            <person name="Stricklin S.L."/>
            <person name="Studholme D.J."/>
            <person name="Sun J."/>
            <person name="Viana C.J."/>
            <person name="Wallin E."/>
            <person name="Wang B."/>
            <person name="Wheeler C."/>
            <person name="Zhu H."/>
            <person name="Dean D.R."/>
            <person name="Dixon R."/>
            <person name="Wood D."/>
        </authorList>
    </citation>
    <scope>NUCLEOTIDE SEQUENCE [LARGE SCALE GENOMIC DNA]</scope>
    <source>
        <strain>DJ / ATCC BAA-1303</strain>
    </source>
</reference>
<evidence type="ECO:0000255" key="1">
    <source>
        <dbReference type="HAMAP-Rule" id="MF_01552"/>
    </source>
</evidence>
<protein>
    <recommendedName>
        <fullName evidence="1">Probable alpha-L-glutamate ligase</fullName>
        <ecNumber evidence="1">6.3.2.-</ecNumber>
    </recommendedName>
</protein>
<gene>
    <name evidence="1" type="primary">rimK</name>
    <name type="ordered locus">Avin_05140</name>
</gene>
<proteinExistence type="inferred from homology"/>
<accession>C1DJI2</accession>